<dbReference type="EC" id="4.3.1.32" evidence="1"/>
<dbReference type="EMBL" id="AY596297">
    <property type="protein sequence ID" value="AAV47973.1"/>
    <property type="status" value="ALT_INIT"/>
    <property type="molecule type" value="Genomic_DNA"/>
</dbReference>
<dbReference type="RefSeq" id="WP_007189144.1">
    <property type="nucleotide sequence ID" value="NZ_CP039138.1"/>
</dbReference>
<dbReference type="SMR" id="Q5UXN0"/>
<dbReference type="STRING" id="272569.rrnAC3279"/>
<dbReference type="PaxDb" id="272569-rrnAC3279"/>
<dbReference type="EnsemblBacteria" id="AAV47973">
    <property type="protein sequence ID" value="AAV47973"/>
    <property type="gene ID" value="rrnAC3279"/>
</dbReference>
<dbReference type="GeneID" id="40154075"/>
<dbReference type="KEGG" id="hma:rrnAC3279"/>
<dbReference type="PATRIC" id="fig|272569.17.peg.3810"/>
<dbReference type="eggNOG" id="arCOG00657">
    <property type="taxonomic scope" value="Archaea"/>
</dbReference>
<dbReference type="HOGENOM" id="CLU_054174_0_0_2"/>
<dbReference type="UniPathway" id="UPA00072"/>
<dbReference type="Proteomes" id="UP000001169">
    <property type="component" value="Chromosome I"/>
</dbReference>
<dbReference type="GO" id="GO:0051539">
    <property type="term" value="F:4 iron, 4 sulfur cluster binding"/>
    <property type="evidence" value="ECO:0007669"/>
    <property type="project" value="UniProtKB-KW"/>
</dbReference>
<dbReference type="GO" id="GO:0044689">
    <property type="term" value="F:7,8-didemethyl-8-hydroxy-5-deazariboflavin synthase activity"/>
    <property type="evidence" value="ECO:0007669"/>
    <property type="project" value="UniProtKB-EC"/>
</dbReference>
<dbReference type="GO" id="GO:0005506">
    <property type="term" value="F:iron ion binding"/>
    <property type="evidence" value="ECO:0007669"/>
    <property type="project" value="UniProtKB-UniRule"/>
</dbReference>
<dbReference type="GO" id="GO:0016765">
    <property type="term" value="F:transferase activity, transferring alkyl or aryl (other than methyl) groups"/>
    <property type="evidence" value="ECO:0007669"/>
    <property type="project" value="InterPro"/>
</dbReference>
<dbReference type="CDD" id="cd01335">
    <property type="entry name" value="Radical_SAM"/>
    <property type="match status" value="1"/>
</dbReference>
<dbReference type="Gene3D" id="3.20.20.70">
    <property type="entry name" value="Aldolase class I"/>
    <property type="match status" value="1"/>
</dbReference>
<dbReference type="HAMAP" id="MF_01611">
    <property type="entry name" value="FO_synth_sub1"/>
    <property type="match status" value="1"/>
</dbReference>
<dbReference type="InterPro" id="IPR013785">
    <property type="entry name" value="Aldolase_TIM"/>
</dbReference>
<dbReference type="InterPro" id="IPR019939">
    <property type="entry name" value="CofG_family"/>
</dbReference>
<dbReference type="InterPro" id="IPR006638">
    <property type="entry name" value="Elp3/MiaA/NifB-like_rSAM"/>
</dbReference>
<dbReference type="InterPro" id="IPR034405">
    <property type="entry name" value="F420"/>
</dbReference>
<dbReference type="InterPro" id="IPR007197">
    <property type="entry name" value="rSAM"/>
</dbReference>
<dbReference type="NCBIfam" id="TIGR03550">
    <property type="entry name" value="F420_cofG"/>
    <property type="match status" value="1"/>
</dbReference>
<dbReference type="NCBIfam" id="NF004884">
    <property type="entry name" value="PRK06245.1"/>
    <property type="match status" value="1"/>
</dbReference>
<dbReference type="PANTHER" id="PTHR43076:SF15">
    <property type="entry name" value="7,8-DIDEMETHYL-8-HYDROXY-5-DEAZARIBOFLAVIN SYNTHASE"/>
    <property type="match status" value="1"/>
</dbReference>
<dbReference type="PANTHER" id="PTHR43076">
    <property type="entry name" value="FO SYNTHASE (COFH)"/>
    <property type="match status" value="1"/>
</dbReference>
<dbReference type="Pfam" id="PF04055">
    <property type="entry name" value="Radical_SAM"/>
    <property type="match status" value="1"/>
</dbReference>
<dbReference type="SFLD" id="SFLDF00294">
    <property type="entry name" value="7_8-didemethyl-8-hydroxy-5-dea"/>
    <property type="match status" value="1"/>
</dbReference>
<dbReference type="SFLD" id="SFLDG01388">
    <property type="entry name" value="7_8-didemethyl-8-hydroxy-5-dea"/>
    <property type="match status" value="1"/>
</dbReference>
<dbReference type="SMART" id="SM00729">
    <property type="entry name" value="Elp3"/>
    <property type="match status" value="1"/>
</dbReference>
<dbReference type="SUPFAM" id="SSF102114">
    <property type="entry name" value="Radical SAM enzymes"/>
    <property type="match status" value="1"/>
</dbReference>
<dbReference type="PROSITE" id="PS51918">
    <property type="entry name" value="RADICAL_SAM"/>
    <property type="match status" value="1"/>
</dbReference>
<gene>
    <name evidence="1" type="primary">cofG</name>
    <name type="ordered locus">rrnAC3279</name>
</gene>
<reference key="1">
    <citation type="journal article" date="2004" name="Genome Res.">
        <title>Genome sequence of Haloarcula marismortui: a halophilic archaeon from the Dead Sea.</title>
        <authorList>
            <person name="Baliga N.S."/>
            <person name="Bonneau R."/>
            <person name="Facciotti M.T."/>
            <person name="Pan M."/>
            <person name="Glusman G."/>
            <person name="Deutsch E.W."/>
            <person name="Shannon P."/>
            <person name="Chiu Y."/>
            <person name="Weng R.S."/>
            <person name="Gan R.R."/>
            <person name="Hung P."/>
            <person name="Date S.V."/>
            <person name="Marcotte E."/>
            <person name="Hood L."/>
            <person name="Ng W.V."/>
        </authorList>
    </citation>
    <scope>NUCLEOTIDE SEQUENCE [LARGE SCALE GENOMIC DNA]</scope>
    <source>
        <strain>ATCC 43049 / DSM 3752 / JCM 8966 / VKM B-1809</strain>
    </source>
</reference>
<organism>
    <name type="scientific">Haloarcula marismortui (strain ATCC 43049 / DSM 3752 / JCM 8966 / VKM B-1809)</name>
    <name type="common">Halobacterium marismortui</name>
    <dbReference type="NCBI Taxonomy" id="272569"/>
    <lineage>
        <taxon>Archaea</taxon>
        <taxon>Methanobacteriati</taxon>
        <taxon>Methanobacteriota</taxon>
        <taxon>Stenosarchaea group</taxon>
        <taxon>Halobacteria</taxon>
        <taxon>Halobacteriales</taxon>
        <taxon>Haloarculaceae</taxon>
        <taxon>Haloarcula</taxon>
    </lineage>
</organism>
<accession>Q5UXN0</accession>
<proteinExistence type="inferred from homology"/>
<feature type="chain" id="PRO_0000147761" description="7,8-didemethyl-8-hydroxy-5-deazariboflavin synthase">
    <location>
        <begin position="1"/>
        <end position="368"/>
    </location>
</feature>
<feature type="domain" description="Radical SAM core" evidence="2">
    <location>
        <begin position="36"/>
        <end position="272"/>
    </location>
</feature>
<feature type="binding site" evidence="1">
    <location>
        <position position="50"/>
    </location>
    <ligand>
        <name>[4Fe-4S] cluster</name>
        <dbReference type="ChEBI" id="CHEBI:49883"/>
        <note>4Fe-4S-S-AdoMet</note>
    </ligand>
</feature>
<feature type="binding site" evidence="1">
    <location>
        <position position="54"/>
    </location>
    <ligand>
        <name>[4Fe-4S] cluster</name>
        <dbReference type="ChEBI" id="CHEBI:49883"/>
        <note>4Fe-4S-S-AdoMet</note>
    </ligand>
</feature>
<feature type="binding site" evidence="1">
    <location>
        <position position="57"/>
    </location>
    <ligand>
        <name>[4Fe-4S] cluster</name>
        <dbReference type="ChEBI" id="CHEBI:49883"/>
        <note>4Fe-4S-S-AdoMet</note>
    </ligand>
</feature>
<keyword id="KW-0004">4Fe-4S</keyword>
<keyword id="KW-0408">Iron</keyword>
<keyword id="KW-0411">Iron-sulfur</keyword>
<keyword id="KW-0456">Lyase</keyword>
<keyword id="KW-0479">Metal-binding</keyword>
<keyword id="KW-1185">Reference proteome</keyword>
<keyword id="KW-0949">S-adenosyl-L-methionine</keyword>
<comment type="function">
    <text evidence="1">Catalyzes the radical-mediated synthesis of 7,8-didemethyl-8-hydroxy-5-deazariboflavin from 5-amino-5-(4-hydroxybenzyl)-6-(D-ribitylimino)-5,6-dihydrouracil.</text>
</comment>
<comment type="catalytic activity">
    <reaction evidence="1">
        <text>5-amino-5-(4-hydroxybenzyl)-6-(D-ribitylimino)-5,6-dihydrouracil + S-adenosyl-L-methionine = 7,8-didemethyl-8-hydroxy-5-deazariboflavin + 5'-deoxyadenosine + L-methionine + NH4(+) + H(+)</text>
        <dbReference type="Rhea" id="RHEA:55204"/>
        <dbReference type="ChEBI" id="CHEBI:15378"/>
        <dbReference type="ChEBI" id="CHEBI:17319"/>
        <dbReference type="ChEBI" id="CHEBI:28938"/>
        <dbReference type="ChEBI" id="CHEBI:57844"/>
        <dbReference type="ChEBI" id="CHEBI:59789"/>
        <dbReference type="ChEBI" id="CHEBI:59904"/>
        <dbReference type="ChEBI" id="CHEBI:85936"/>
        <dbReference type="EC" id="4.3.1.32"/>
    </reaction>
</comment>
<comment type="cofactor">
    <cofactor evidence="1">
        <name>[4Fe-4S] cluster</name>
        <dbReference type="ChEBI" id="CHEBI:49883"/>
    </cofactor>
    <text evidence="1">Binds 1 [4Fe-4S] cluster. The cluster is coordinated with 3 cysteines and an exchangeable S-adenosyl-L-methionine.</text>
</comment>
<comment type="pathway">
    <text evidence="1">Cofactor biosynthesis; coenzyme F0 biosynthesis.</text>
</comment>
<comment type="subunit">
    <text evidence="1">Consists of two subunits, CofG and CofH.</text>
</comment>
<comment type="similarity">
    <text evidence="1">Belongs to the radical SAM superfamily. CofG family.</text>
</comment>
<comment type="sequence caution" evidence="3">
    <conflict type="erroneous initiation">
        <sequence resource="EMBL-CDS" id="AAV47973"/>
    </conflict>
    <text>Truncated N-terminus.</text>
</comment>
<protein>
    <recommendedName>
        <fullName evidence="1">7,8-didemethyl-8-hydroxy-5-deazariboflavin synthase</fullName>
        <ecNumber evidence="1">4.3.1.32</ecNumber>
    </recommendedName>
    <alternativeName>
        <fullName evidence="1">FO synthase subunit 1</fullName>
    </alternativeName>
</protein>
<sequence length="368" mass="40497">MIPGTDAYDIAIEISDADIERLLSVMPEDVEAASALSYCRNVFLPLTTACRYTCTYCTYYDPPGQAELMDREEIRETCRRGADAGCTEALFTFGDDPDDRYTAVHDQLAEWGHDSIHEYLREACEIALEEGLLPHANPGDQTREQMAHVADLNASMGVMLETTTEVQAHGGPRAKNPGQRLNTLRVAGELGVPFTTGILVGIGEDWHHRAESLLAIREMHERYGHIQEVIIQPVVENERWQGGSPDLATMRRVTAMARAALPEEVSVQVPPNLAPARDLTDCGIDDLGGVSPVTVDHINPEYEWPALQELTAVAEAAEVPLSERLPVYDHFVDDGWLSAPIEAAIEADNDAGDRFRSILDRGVNPVTL</sequence>
<evidence type="ECO:0000255" key="1">
    <source>
        <dbReference type="HAMAP-Rule" id="MF_01611"/>
    </source>
</evidence>
<evidence type="ECO:0000255" key="2">
    <source>
        <dbReference type="PROSITE-ProRule" id="PRU01266"/>
    </source>
</evidence>
<evidence type="ECO:0000305" key="3"/>
<name>COFG_HALMA</name>